<name>SUCC_PYRAE</name>
<protein>
    <recommendedName>
        <fullName evidence="1">Succinate--CoA ligase [ADP-forming] subunit beta</fullName>
        <ecNumber evidence="1">6.2.1.5</ecNumber>
    </recommendedName>
    <alternativeName>
        <fullName evidence="1">Succinyl-CoA synthetase subunit beta</fullName>
        <shortName evidence="1">SCS-beta</shortName>
    </alternativeName>
</protein>
<keyword id="KW-0067">ATP-binding</keyword>
<keyword id="KW-0436">Ligase</keyword>
<keyword id="KW-0460">Magnesium</keyword>
<keyword id="KW-0479">Metal-binding</keyword>
<keyword id="KW-0547">Nucleotide-binding</keyword>
<keyword id="KW-1185">Reference proteome</keyword>
<keyword id="KW-0816">Tricarboxylic acid cycle</keyword>
<sequence>MKLHEYEAKELFSKYGVKIPPGKVALTPEEVLKIAREIGAPVVLKAQVVVAGRGKAGGIKVANSPEEAYELSKRMFGMNIKGLIVKKLYVTKFVEVEREMYLSLIIDRASRRYLFLASPVGGMDIEEIAKTSPEKIKRVYVDPATGLRDYHVRSIVSWLGFKQGTSQWQQAASIVQAMYRIMVDYDAELVESNPLAVTKEGEVIPLDARVIVDDNALFKHPELEKALEEDPRDVTEFEAYAKKIGFHYVELDGDVGIIGNGAGLTMATMDLVYHFGGRPANFLDIGGGASREVVKEAVKVLLHHPRVKVIFVNIFGGITRADEVALGIKEALAESGGTNKKIVVRMKGTNEELGRAILAEIGVPLFDSAEEAAKKAVELARV</sequence>
<gene>
    <name evidence="1" type="primary">sucC</name>
    <name type="ordered locus">PAE2312</name>
</gene>
<dbReference type="EC" id="6.2.1.5" evidence="1"/>
<dbReference type="EMBL" id="AE009441">
    <property type="protein sequence ID" value="AAL64103.1"/>
    <property type="molecule type" value="Genomic_DNA"/>
</dbReference>
<dbReference type="RefSeq" id="WP_011008571.1">
    <property type="nucleotide sequence ID" value="NC_003364.1"/>
</dbReference>
<dbReference type="SMR" id="Q8ZVF3"/>
<dbReference type="FunCoup" id="Q8ZVF3">
    <property type="interactions" value="250"/>
</dbReference>
<dbReference type="STRING" id="178306.PAE2312"/>
<dbReference type="EnsemblBacteria" id="AAL64103">
    <property type="protein sequence ID" value="AAL64103"/>
    <property type="gene ID" value="PAE2312"/>
</dbReference>
<dbReference type="GeneID" id="1464439"/>
<dbReference type="KEGG" id="pai:PAE2312"/>
<dbReference type="PATRIC" id="fig|178306.9.peg.1723"/>
<dbReference type="eggNOG" id="arCOG01337">
    <property type="taxonomic scope" value="Archaea"/>
</dbReference>
<dbReference type="HOGENOM" id="CLU_037430_0_2_2"/>
<dbReference type="InParanoid" id="Q8ZVF3"/>
<dbReference type="UniPathway" id="UPA00223">
    <property type="reaction ID" value="UER00999"/>
</dbReference>
<dbReference type="Proteomes" id="UP000002439">
    <property type="component" value="Chromosome"/>
</dbReference>
<dbReference type="GO" id="GO:0042709">
    <property type="term" value="C:succinate-CoA ligase complex"/>
    <property type="evidence" value="ECO:0000318"/>
    <property type="project" value="GO_Central"/>
</dbReference>
<dbReference type="GO" id="GO:0005524">
    <property type="term" value="F:ATP binding"/>
    <property type="evidence" value="ECO:0007669"/>
    <property type="project" value="UniProtKB-UniRule"/>
</dbReference>
<dbReference type="GO" id="GO:0000287">
    <property type="term" value="F:magnesium ion binding"/>
    <property type="evidence" value="ECO:0007669"/>
    <property type="project" value="UniProtKB-UniRule"/>
</dbReference>
<dbReference type="GO" id="GO:0004775">
    <property type="term" value="F:succinate-CoA ligase (ADP-forming) activity"/>
    <property type="evidence" value="ECO:0000318"/>
    <property type="project" value="GO_Central"/>
</dbReference>
<dbReference type="GO" id="GO:0004776">
    <property type="term" value="F:succinate-CoA ligase (GDP-forming) activity"/>
    <property type="evidence" value="ECO:0007669"/>
    <property type="project" value="RHEA"/>
</dbReference>
<dbReference type="GO" id="GO:0006104">
    <property type="term" value="P:succinyl-CoA metabolic process"/>
    <property type="evidence" value="ECO:0000318"/>
    <property type="project" value="GO_Central"/>
</dbReference>
<dbReference type="GO" id="GO:0006099">
    <property type="term" value="P:tricarboxylic acid cycle"/>
    <property type="evidence" value="ECO:0000318"/>
    <property type="project" value="GO_Central"/>
</dbReference>
<dbReference type="FunFam" id="3.30.1490.20:FF:000014">
    <property type="entry name" value="Succinate--CoA ligase [ADP-forming] subunit beta"/>
    <property type="match status" value="1"/>
</dbReference>
<dbReference type="FunFam" id="3.30.470.20:FF:000002">
    <property type="entry name" value="Succinate--CoA ligase [ADP-forming] subunit beta"/>
    <property type="match status" value="1"/>
</dbReference>
<dbReference type="FunFam" id="3.40.50.261:FF:000007">
    <property type="entry name" value="Succinate--CoA ligase [ADP-forming] subunit beta"/>
    <property type="match status" value="1"/>
</dbReference>
<dbReference type="Gene3D" id="3.30.1490.20">
    <property type="entry name" value="ATP-grasp fold, A domain"/>
    <property type="match status" value="1"/>
</dbReference>
<dbReference type="Gene3D" id="3.30.470.20">
    <property type="entry name" value="ATP-grasp fold, B domain"/>
    <property type="match status" value="1"/>
</dbReference>
<dbReference type="Gene3D" id="3.40.50.261">
    <property type="entry name" value="Succinyl-CoA synthetase domains"/>
    <property type="match status" value="1"/>
</dbReference>
<dbReference type="HAMAP" id="MF_00558">
    <property type="entry name" value="Succ_CoA_beta"/>
    <property type="match status" value="1"/>
</dbReference>
<dbReference type="InterPro" id="IPR011761">
    <property type="entry name" value="ATP-grasp"/>
</dbReference>
<dbReference type="InterPro" id="IPR013650">
    <property type="entry name" value="ATP-grasp_succ-CoA_synth-type"/>
</dbReference>
<dbReference type="InterPro" id="IPR013815">
    <property type="entry name" value="ATP_grasp_subdomain_1"/>
</dbReference>
<dbReference type="InterPro" id="IPR017866">
    <property type="entry name" value="Succ-CoA_synthase_bsu_CS"/>
</dbReference>
<dbReference type="InterPro" id="IPR005811">
    <property type="entry name" value="SUCC_ACL_C"/>
</dbReference>
<dbReference type="InterPro" id="IPR005809">
    <property type="entry name" value="Succ_CoA_ligase-like_bsu"/>
</dbReference>
<dbReference type="InterPro" id="IPR016102">
    <property type="entry name" value="Succinyl-CoA_synth-like"/>
</dbReference>
<dbReference type="NCBIfam" id="NF001913">
    <property type="entry name" value="PRK00696.1"/>
    <property type="match status" value="1"/>
</dbReference>
<dbReference type="NCBIfam" id="TIGR01016">
    <property type="entry name" value="sucCoAbeta"/>
    <property type="match status" value="1"/>
</dbReference>
<dbReference type="PANTHER" id="PTHR11815:SF10">
    <property type="entry name" value="SUCCINATE--COA LIGASE [GDP-FORMING] SUBUNIT BETA, MITOCHONDRIAL"/>
    <property type="match status" value="1"/>
</dbReference>
<dbReference type="PANTHER" id="PTHR11815">
    <property type="entry name" value="SUCCINYL-COA SYNTHETASE BETA CHAIN"/>
    <property type="match status" value="1"/>
</dbReference>
<dbReference type="Pfam" id="PF08442">
    <property type="entry name" value="ATP-grasp_2"/>
    <property type="match status" value="1"/>
</dbReference>
<dbReference type="Pfam" id="PF00549">
    <property type="entry name" value="Ligase_CoA"/>
    <property type="match status" value="1"/>
</dbReference>
<dbReference type="PIRSF" id="PIRSF001554">
    <property type="entry name" value="SucCS_beta"/>
    <property type="match status" value="1"/>
</dbReference>
<dbReference type="SUPFAM" id="SSF56059">
    <property type="entry name" value="Glutathione synthetase ATP-binding domain-like"/>
    <property type="match status" value="1"/>
</dbReference>
<dbReference type="SUPFAM" id="SSF52210">
    <property type="entry name" value="Succinyl-CoA synthetase domains"/>
    <property type="match status" value="1"/>
</dbReference>
<dbReference type="PROSITE" id="PS50975">
    <property type="entry name" value="ATP_GRASP"/>
    <property type="match status" value="1"/>
</dbReference>
<dbReference type="PROSITE" id="PS01217">
    <property type="entry name" value="SUCCINYL_COA_LIG_3"/>
    <property type="match status" value="1"/>
</dbReference>
<organism>
    <name type="scientific">Pyrobaculum aerophilum (strain ATCC 51768 / DSM 7523 / JCM 9630 / CIP 104966 / NBRC 100827 / IM2)</name>
    <dbReference type="NCBI Taxonomy" id="178306"/>
    <lineage>
        <taxon>Archaea</taxon>
        <taxon>Thermoproteota</taxon>
        <taxon>Thermoprotei</taxon>
        <taxon>Thermoproteales</taxon>
        <taxon>Thermoproteaceae</taxon>
        <taxon>Pyrobaculum</taxon>
    </lineage>
</organism>
<reference key="1">
    <citation type="journal article" date="2002" name="Proc. Natl. Acad. Sci. U.S.A.">
        <title>Genome sequence of the hyperthermophilic crenarchaeon Pyrobaculum aerophilum.</title>
        <authorList>
            <person name="Fitz-Gibbon S.T."/>
            <person name="Ladner H."/>
            <person name="Kim U.-J."/>
            <person name="Stetter K.O."/>
            <person name="Simon M.I."/>
            <person name="Miller J.H."/>
        </authorList>
    </citation>
    <scope>NUCLEOTIDE SEQUENCE [LARGE SCALE GENOMIC DNA]</scope>
    <source>
        <strain>ATCC 51768 / DSM 7523 / JCM 9630 / CIP 104966 / NBRC 100827 / IM2</strain>
    </source>
</reference>
<feature type="chain" id="PRO_0000102887" description="Succinate--CoA ligase [ADP-forming] subunit beta">
    <location>
        <begin position="1"/>
        <end position="382"/>
    </location>
</feature>
<feature type="domain" description="ATP-grasp" evidence="1">
    <location>
        <begin position="9"/>
        <end position="240"/>
    </location>
</feature>
<feature type="binding site" evidence="1">
    <location>
        <position position="45"/>
    </location>
    <ligand>
        <name>ATP</name>
        <dbReference type="ChEBI" id="CHEBI:30616"/>
    </ligand>
</feature>
<feature type="binding site" evidence="1">
    <location>
        <begin position="52"/>
        <end position="54"/>
    </location>
    <ligand>
        <name>ATP</name>
        <dbReference type="ChEBI" id="CHEBI:30616"/>
    </ligand>
</feature>
<feature type="binding site" evidence="1">
    <location>
        <position position="94"/>
    </location>
    <ligand>
        <name>ATP</name>
        <dbReference type="ChEBI" id="CHEBI:30616"/>
    </ligand>
</feature>
<feature type="binding site" evidence="1">
    <location>
        <position position="99"/>
    </location>
    <ligand>
        <name>ATP</name>
        <dbReference type="ChEBI" id="CHEBI:30616"/>
    </ligand>
</feature>
<feature type="binding site" evidence="1">
    <location>
        <position position="193"/>
    </location>
    <ligand>
        <name>Mg(2+)</name>
        <dbReference type="ChEBI" id="CHEBI:18420"/>
    </ligand>
</feature>
<feature type="binding site" evidence="1">
    <location>
        <position position="207"/>
    </location>
    <ligand>
        <name>Mg(2+)</name>
        <dbReference type="ChEBI" id="CHEBI:18420"/>
    </ligand>
</feature>
<feature type="binding site" evidence="1">
    <location>
        <position position="260"/>
    </location>
    <ligand>
        <name>substrate</name>
        <note>ligand shared with subunit alpha</note>
    </ligand>
</feature>
<feature type="binding site" evidence="1">
    <location>
        <begin position="317"/>
        <end position="319"/>
    </location>
    <ligand>
        <name>substrate</name>
        <note>ligand shared with subunit alpha</note>
    </ligand>
</feature>
<comment type="function">
    <text evidence="1">Succinyl-CoA synthetase functions in the citric acid cycle (TCA), coupling the hydrolysis of succinyl-CoA to the synthesis of either ATP or GTP and thus represents the only step of substrate-level phosphorylation in the TCA. The beta subunit provides nucleotide specificity of the enzyme and binds the substrate succinate, while the binding sites for coenzyme A and phosphate are found in the alpha subunit.</text>
</comment>
<comment type="catalytic activity">
    <reaction evidence="1">
        <text>succinate + ATP + CoA = succinyl-CoA + ADP + phosphate</text>
        <dbReference type="Rhea" id="RHEA:17661"/>
        <dbReference type="ChEBI" id="CHEBI:30031"/>
        <dbReference type="ChEBI" id="CHEBI:30616"/>
        <dbReference type="ChEBI" id="CHEBI:43474"/>
        <dbReference type="ChEBI" id="CHEBI:57287"/>
        <dbReference type="ChEBI" id="CHEBI:57292"/>
        <dbReference type="ChEBI" id="CHEBI:456216"/>
        <dbReference type="EC" id="6.2.1.5"/>
    </reaction>
    <physiologicalReaction direction="right-to-left" evidence="1">
        <dbReference type="Rhea" id="RHEA:17663"/>
    </physiologicalReaction>
</comment>
<comment type="catalytic activity">
    <reaction evidence="1">
        <text>GTP + succinate + CoA = succinyl-CoA + GDP + phosphate</text>
        <dbReference type="Rhea" id="RHEA:22120"/>
        <dbReference type="ChEBI" id="CHEBI:30031"/>
        <dbReference type="ChEBI" id="CHEBI:37565"/>
        <dbReference type="ChEBI" id="CHEBI:43474"/>
        <dbReference type="ChEBI" id="CHEBI:57287"/>
        <dbReference type="ChEBI" id="CHEBI:57292"/>
        <dbReference type="ChEBI" id="CHEBI:58189"/>
    </reaction>
    <physiologicalReaction direction="right-to-left" evidence="1">
        <dbReference type="Rhea" id="RHEA:22122"/>
    </physiologicalReaction>
</comment>
<comment type="cofactor">
    <cofactor evidence="1">
        <name>Mg(2+)</name>
        <dbReference type="ChEBI" id="CHEBI:18420"/>
    </cofactor>
    <text evidence="1">Binds 1 Mg(2+) ion per subunit.</text>
</comment>
<comment type="pathway">
    <text evidence="1">Carbohydrate metabolism; tricarboxylic acid cycle; succinate from succinyl-CoA (ligase route): step 1/1.</text>
</comment>
<comment type="subunit">
    <text evidence="1">Heterotetramer of two alpha and two beta subunits.</text>
</comment>
<comment type="similarity">
    <text evidence="1">Belongs to the succinate/malate CoA ligase beta subunit family.</text>
</comment>
<evidence type="ECO:0000255" key="1">
    <source>
        <dbReference type="HAMAP-Rule" id="MF_00558"/>
    </source>
</evidence>
<proteinExistence type="inferred from homology"/>
<accession>Q8ZVF3</accession>